<organism>
    <name type="scientific">Shigella sonnei (strain Ss046)</name>
    <dbReference type="NCBI Taxonomy" id="300269"/>
    <lineage>
        <taxon>Bacteria</taxon>
        <taxon>Pseudomonadati</taxon>
        <taxon>Pseudomonadota</taxon>
        <taxon>Gammaproteobacteria</taxon>
        <taxon>Enterobacterales</taxon>
        <taxon>Enterobacteriaceae</taxon>
        <taxon>Shigella</taxon>
    </lineage>
</organism>
<proteinExistence type="inferred from homology"/>
<protein>
    <recommendedName>
        <fullName evidence="1">Phosphoglycolate phosphatase</fullName>
        <shortName evidence="1">PGP</shortName>
        <shortName evidence="1">PGPase</shortName>
        <ecNumber evidence="1">3.1.3.18</ecNumber>
    </recommendedName>
</protein>
<reference key="1">
    <citation type="journal article" date="2005" name="Nucleic Acids Res.">
        <title>Genome dynamics and diversity of Shigella species, the etiologic agents of bacillary dysentery.</title>
        <authorList>
            <person name="Yang F."/>
            <person name="Yang J."/>
            <person name="Zhang X."/>
            <person name="Chen L."/>
            <person name="Jiang Y."/>
            <person name="Yan Y."/>
            <person name="Tang X."/>
            <person name="Wang J."/>
            <person name="Xiong Z."/>
            <person name="Dong J."/>
            <person name="Xue Y."/>
            <person name="Zhu Y."/>
            <person name="Xu X."/>
            <person name="Sun L."/>
            <person name="Chen S."/>
            <person name="Nie H."/>
            <person name="Peng J."/>
            <person name="Xu J."/>
            <person name="Wang Y."/>
            <person name="Yuan Z."/>
            <person name="Wen Y."/>
            <person name="Yao Z."/>
            <person name="Shen Y."/>
            <person name="Qiang B."/>
            <person name="Hou Y."/>
            <person name="Yu J."/>
            <person name="Jin Q."/>
        </authorList>
    </citation>
    <scope>NUCLEOTIDE SEQUENCE [LARGE SCALE GENOMIC DNA]</scope>
    <source>
        <strain>Ss046</strain>
    </source>
</reference>
<keyword id="KW-0119">Carbohydrate metabolism</keyword>
<keyword id="KW-0868">Chloride</keyword>
<keyword id="KW-0378">Hydrolase</keyword>
<keyword id="KW-0460">Magnesium</keyword>
<keyword id="KW-0479">Metal-binding</keyword>
<keyword id="KW-1185">Reference proteome</keyword>
<accession>Q3YWN8</accession>
<gene>
    <name type="ordered locus">SSON_3516</name>
</gene>
<name>GPH_SHISS</name>
<evidence type="ECO:0000255" key="1">
    <source>
        <dbReference type="HAMAP-Rule" id="MF_00495"/>
    </source>
</evidence>
<sequence length="252" mass="27403">MNKFEDIRGVAFDLDGTLVDSAPGLAAAVDMALYALELPIAGEERVITWIGNGADVLMERALTWARQERATQRKTMGKPPVDDDIPAEEQVRILRKLFDRYYGEVAEEGTFLFPHVADTLGALQAKGLPLGLVTNKPTPFVAPLLEALDIAKYFSVVIGGDDVQNKKPHPDPLLLVAERMGIAPQQMLFVGDSRNDIQAAKAAGCPSVGLTYGYNYGEAIDLSQPDVIYQSINDLLPALGLPHSENQESKND</sequence>
<feature type="chain" id="PRO_0000238180" description="Phosphoglycolate phosphatase">
    <location>
        <begin position="1"/>
        <end position="252"/>
    </location>
</feature>
<feature type="active site" description="Nucleophile" evidence="1">
    <location>
        <position position="13"/>
    </location>
</feature>
<feature type="binding site" evidence="1">
    <location>
        <position position="13"/>
    </location>
    <ligand>
        <name>Mg(2+)</name>
        <dbReference type="ChEBI" id="CHEBI:18420"/>
    </ligand>
</feature>
<feature type="binding site" evidence="1">
    <location>
        <position position="15"/>
    </location>
    <ligand>
        <name>Mg(2+)</name>
        <dbReference type="ChEBI" id="CHEBI:18420"/>
    </ligand>
</feature>
<feature type="binding site" evidence="1">
    <location>
        <position position="192"/>
    </location>
    <ligand>
        <name>Mg(2+)</name>
        <dbReference type="ChEBI" id="CHEBI:18420"/>
    </ligand>
</feature>
<comment type="function">
    <text evidence="1">Specifically catalyzes the dephosphorylation of 2-phosphoglycolate. Is involved in the dissimilation of the intracellular 2-phosphoglycolate formed during the DNA repair of 3'-phosphoglycolate ends, a major class of DNA lesions induced by oxidative stress.</text>
</comment>
<comment type="catalytic activity">
    <reaction evidence="1">
        <text>2-phosphoglycolate + H2O = glycolate + phosphate</text>
        <dbReference type="Rhea" id="RHEA:14369"/>
        <dbReference type="ChEBI" id="CHEBI:15377"/>
        <dbReference type="ChEBI" id="CHEBI:29805"/>
        <dbReference type="ChEBI" id="CHEBI:43474"/>
        <dbReference type="ChEBI" id="CHEBI:58033"/>
        <dbReference type="EC" id="3.1.3.18"/>
    </reaction>
</comment>
<comment type="cofactor">
    <cofactor evidence="1">
        <name>Mg(2+)</name>
        <dbReference type="ChEBI" id="CHEBI:18420"/>
    </cofactor>
</comment>
<comment type="cofactor">
    <cofactor evidence="1">
        <name>chloride</name>
        <dbReference type="ChEBI" id="CHEBI:17996"/>
    </cofactor>
</comment>
<comment type="pathway">
    <text evidence="1">Organic acid metabolism; glycolate biosynthesis; glycolate from 2-phosphoglycolate: step 1/1.</text>
</comment>
<comment type="subunit">
    <text evidence="1">Monomer.</text>
</comment>
<comment type="similarity">
    <text evidence="1">Belongs to the HAD-like hydrolase superfamily. CbbY/CbbZ/Gph/YieH family.</text>
</comment>
<dbReference type="EC" id="3.1.3.18" evidence="1"/>
<dbReference type="EMBL" id="CP000038">
    <property type="protein sequence ID" value="AAZ90074.1"/>
    <property type="molecule type" value="Genomic_DNA"/>
</dbReference>
<dbReference type="SMR" id="Q3YWN8"/>
<dbReference type="KEGG" id="ssn:SSON_3516"/>
<dbReference type="HOGENOM" id="CLU_045011_19_1_6"/>
<dbReference type="UniPathway" id="UPA00865">
    <property type="reaction ID" value="UER00834"/>
</dbReference>
<dbReference type="Proteomes" id="UP000002529">
    <property type="component" value="Chromosome"/>
</dbReference>
<dbReference type="GO" id="GO:0005829">
    <property type="term" value="C:cytosol"/>
    <property type="evidence" value="ECO:0007669"/>
    <property type="project" value="TreeGrafter"/>
</dbReference>
<dbReference type="GO" id="GO:0046872">
    <property type="term" value="F:metal ion binding"/>
    <property type="evidence" value="ECO:0007669"/>
    <property type="project" value="UniProtKB-KW"/>
</dbReference>
<dbReference type="GO" id="GO:0008967">
    <property type="term" value="F:phosphoglycolate phosphatase activity"/>
    <property type="evidence" value="ECO:0007669"/>
    <property type="project" value="UniProtKB-UniRule"/>
</dbReference>
<dbReference type="GO" id="GO:0005975">
    <property type="term" value="P:carbohydrate metabolic process"/>
    <property type="evidence" value="ECO:0007669"/>
    <property type="project" value="InterPro"/>
</dbReference>
<dbReference type="GO" id="GO:0006281">
    <property type="term" value="P:DNA repair"/>
    <property type="evidence" value="ECO:0007669"/>
    <property type="project" value="TreeGrafter"/>
</dbReference>
<dbReference type="GO" id="GO:0046295">
    <property type="term" value="P:glycolate biosynthetic process"/>
    <property type="evidence" value="ECO:0007669"/>
    <property type="project" value="UniProtKB-UniRule"/>
</dbReference>
<dbReference type="CDD" id="cd16417">
    <property type="entry name" value="HAD_PGPase"/>
    <property type="match status" value="1"/>
</dbReference>
<dbReference type="FunFam" id="1.10.150.240:FF:000003">
    <property type="entry name" value="Phosphoglycolate phosphatase"/>
    <property type="match status" value="1"/>
</dbReference>
<dbReference type="FunFam" id="3.40.50.1000:FF:000022">
    <property type="entry name" value="Phosphoglycolate phosphatase"/>
    <property type="match status" value="1"/>
</dbReference>
<dbReference type="Gene3D" id="3.40.50.1000">
    <property type="entry name" value="HAD superfamily/HAD-like"/>
    <property type="match status" value="1"/>
</dbReference>
<dbReference type="Gene3D" id="1.10.150.240">
    <property type="entry name" value="Putative phosphatase, domain 2"/>
    <property type="match status" value="1"/>
</dbReference>
<dbReference type="HAMAP" id="MF_00495">
    <property type="entry name" value="GPH_hydrolase_bact"/>
    <property type="match status" value="1"/>
</dbReference>
<dbReference type="InterPro" id="IPR050155">
    <property type="entry name" value="HAD-like_hydrolase_sf"/>
</dbReference>
<dbReference type="InterPro" id="IPR036412">
    <property type="entry name" value="HAD-like_sf"/>
</dbReference>
<dbReference type="InterPro" id="IPR006439">
    <property type="entry name" value="HAD-SF_hydro_IA"/>
</dbReference>
<dbReference type="InterPro" id="IPR023214">
    <property type="entry name" value="HAD_sf"/>
</dbReference>
<dbReference type="InterPro" id="IPR023198">
    <property type="entry name" value="PGP-like_dom2"/>
</dbReference>
<dbReference type="InterPro" id="IPR037512">
    <property type="entry name" value="PGPase_prok"/>
</dbReference>
<dbReference type="NCBIfam" id="TIGR01549">
    <property type="entry name" value="HAD-SF-IA-v1"/>
    <property type="match status" value="1"/>
</dbReference>
<dbReference type="NCBIfam" id="TIGR01509">
    <property type="entry name" value="HAD-SF-IA-v3"/>
    <property type="match status" value="1"/>
</dbReference>
<dbReference type="NCBIfam" id="TIGR01449">
    <property type="entry name" value="PGP_bact"/>
    <property type="match status" value="1"/>
</dbReference>
<dbReference type="NCBIfam" id="NF009694">
    <property type="entry name" value="PRK13222.1-1"/>
    <property type="match status" value="1"/>
</dbReference>
<dbReference type="NCBIfam" id="NF009695">
    <property type="entry name" value="PRK13222.1-2"/>
    <property type="match status" value="1"/>
</dbReference>
<dbReference type="NCBIfam" id="NF009697">
    <property type="entry name" value="PRK13222.1-4"/>
    <property type="match status" value="1"/>
</dbReference>
<dbReference type="PANTHER" id="PTHR43434">
    <property type="entry name" value="PHOSPHOGLYCOLATE PHOSPHATASE"/>
    <property type="match status" value="1"/>
</dbReference>
<dbReference type="PANTHER" id="PTHR43434:SF1">
    <property type="entry name" value="PHOSPHOGLYCOLATE PHOSPHATASE"/>
    <property type="match status" value="1"/>
</dbReference>
<dbReference type="Pfam" id="PF00702">
    <property type="entry name" value="Hydrolase"/>
    <property type="match status" value="1"/>
</dbReference>
<dbReference type="PRINTS" id="PR00413">
    <property type="entry name" value="HADHALOGNASE"/>
</dbReference>
<dbReference type="SFLD" id="SFLDG01135">
    <property type="entry name" value="C1.5.6:_HAD__Beta-PGM__Phospha"/>
    <property type="match status" value="1"/>
</dbReference>
<dbReference type="SFLD" id="SFLDG01129">
    <property type="entry name" value="C1.5:_HAD__Beta-PGM__Phosphata"/>
    <property type="match status" value="1"/>
</dbReference>
<dbReference type="SUPFAM" id="SSF56784">
    <property type="entry name" value="HAD-like"/>
    <property type="match status" value="1"/>
</dbReference>